<proteinExistence type="inferred from homology"/>
<dbReference type="EMBL" id="AP009240">
    <property type="protein sequence ID" value="BAG76727.1"/>
    <property type="molecule type" value="Genomic_DNA"/>
</dbReference>
<dbReference type="RefSeq" id="WP_001307134.1">
    <property type="nucleotide sequence ID" value="NC_011415.1"/>
</dbReference>
<dbReference type="SMR" id="B6I9L6"/>
<dbReference type="KEGG" id="ecy:ECSE_1203"/>
<dbReference type="HOGENOM" id="CLU_143527_1_0_6"/>
<dbReference type="Proteomes" id="UP000008199">
    <property type="component" value="Chromosome"/>
</dbReference>
<dbReference type="GO" id="GO:0005737">
    <property type="term" value="C:cytoplasm"/>
    <property type="evidence" value="ECO:0007669"/>
    <property type="project" value="UniProtKB-SubCell"/>
</dbReference>
<dbReference type="GO" id="GO:0009267">
    <property type="term" value="P:cellular response to starvation"/>
    <property type="evidence" value="ECO:0007669"/>
    <property type="project" value="UniProtKB-UniRule"/>
</dbReference>
<dbReference type="FunFam" id="2.40.50.650:FF:000001">
    <property type="entry name" value="Anti-adapter protein IraM"/>
    <property type="match status" value="1"/>
</dbReference>
<dbReference type="Gene3D" id="2.40.50.650">
    <property type="match status" value="1"/>
</dbReference>
<dbReference type="HAMAP" id="MF_01199">
    <property type="entry name" value="Anti_adapt_IraM"/>
    <property type="match status" value="1"/>
</dbReference>
<dbReference type="InterPro" id="IPR014448">
    <property type="entry name" value="Anti-adapter_IraM"/>
</dbReference>
<dbReference type="InterPro" id="IPR038679">
    <property type="entry name" value="PmrD_sf"/>
</dbReference>
<dbReference type="NCBIfam" id="NF007393">
    <property type="entry name" value="PRK09919.1"/>
    <property type="match status" value="1"/>
</dbReference>
<dbReference type="PIRSF" id="PIRSF007036">
    <property type="entry name" value="Elb1"/>
    <property type="match status" value="1"/>
</dbReference>
<sequence length="107" mass="12110">MKWIVIDTIIQPSCGISFSAIWGNMKMIIWYQSTIFLPPGSIFTPVKSGIILKDKEYPITIYNIAPFNKDLWSLLKSSQECPPGESKITNKCLHNSCIIKICPYGLK</sequence>
<keyword id="KW-0963">Cytoplasm</keyword>
<keyword id="KW-0346">Stress response</keyword>
<protein>
    <recommendedName>
        <fullName evidence="1">Anti-adapter protein IraM</fullName>
    </recommendedName>
</protein>
<feature type="chain" id="PRO_1000138500" description="Anti-adapter protein IraM">
    <location>
        <begin position="1"/>
        <end position="107"/>
    </location>
</feature>
<comment type="function">
    <text evidence="1">Inhibits RpoS proteolysis by regulating RssB activity, thereby increasing the stability of the sigma stress factor RpoS during magnesium starvation.</text>
</comment>
<comment type="subcellular location">
    <subcellularLocation>
        <location evidence="1">Cytoplasm</location>
    </subcellularLocation>
</comment>
<comment type="similarity">
    <text evidence="1">Belongs to the IraM/RssC family.</text>
</comment>
<evidence type="ECO:0000255" key="1">
    <source>
        <dbReference type="HAMAP-Rule" id="MF_01199"/>
    </source>
</evidence>
<accession>B6I9L6</accession>
<gene>
    <name evidence="1" type="primary">iraM</name>
    <name type="ordered locus">ECSE_1203</name>
</gene>
<name>IRAM_ECOSE</name>
<organism>
    <name type="scientific">Escherichia coli (strain SE11)</name>
    <dbReference type="NCBI Taxonomy" id="409438"/>
    <lineage>
        <taxon>Bacteria</taxon>
        <taxon>Pseudomonadati</taxon>
        <taxon>Pseudomonadota</taxon>
        <taxon>Gammaproteobacteria</taxon>
        <taxon>Enterobacterales</taxon>
        <taxon>Enterobacteriaceae</taxon>
        <taxon>Escherichia</taxon>
    </lineage>
</organism>
<reference key="1">
    <citation type="journal article" date="2008" name="DNA Res.">
        <title>Complete genome sequence and comparative analysis of the wild-type commensal Escherichia coli strain SE11 isolated from a healthy adult.</title>
        <authorList>
            <person name="Oshima K."/>
            <person name="Toh H."/>
            <person name="Ogura Y."/>
            <person name="Sasamoto H."/>
            <person name="Morita H."/>
            <person name="Park S.-H."/>
            <person name="Ooka T."/>
            <person name="Iyoda S."/>
            <person name="Taylor T.D."/>
            <person name="Hayashi T."/>
            <person name="Itoh K."/>
            <person name="Hattori M."/>
        </authorList>
    </citation>
    <scope>NUCLEOTIDE SEQUENCE [LARGE SCALE GENOMIC DNA]</scope>
    <source>
        <strain>SE11</strain>
    </source>
</reference>